<protein>
    <recommendedName>
        <fullName evidence="7">Pseudouridylate synthase PUS7L</fullName>
        <ecNumber evidence="4">5.4.99.-</ecNumber>
    </recommendedName>
    <alternativeName>
        <fullName evidence="7">Pseudouridylate synthase 7 homolog-like protein</fullName>
    </alternativeName>
</protein>
<sequence>MEEDTDYRIRFSSLCFFNDHVGFHGTIKSSPSDFIVIEIDEQGQLVNKTIDEPIFKISEIQLEPNNFPKKPKLDLQNLSLEDGRNQEVHTLIKYTDGDQNHQSGSEKEDTIVDGTSKCEEKADVLSSFLDEKTHELLNNFACDVREKWLSKTELIGLPPEFSIGRILDKNQRASLHSAIRQKFPFLVTVGKNSEIVVKPNLEYKELCHLVSEEEAFDFFKYLDAKKENSKFTFKPDTNKDHRKAVHHFVNKKFGNLVETKSFSKMNCSAGNPNVVVTVRFREKAHKRGKRPLSECQEGKVIYTAFTLRKENLEMFEAIGFLAIKLGVIPSDFSYAGLKDKKAITYQAMVVRKVTPERLKNIEKEIEKKRMNVFNIRSVDDSLRLGQLKGNHFDIVIRNLKKQINDSANLRERIMEAIENVKKKGFVNYYGPQRFGKGRKVHTDQIGLALLKNEMMKAIKLFLTPEDLDDPVNRAKKYFLQTEDAKGTLSLMPEFKVRERALLEALHRFGMTEEGCIQAWFSLPHSMRIFYVHAYTSKIWNEAVSYRLETYGARVVQGDLVCLDEDIDDENFPNSKIHLVTEEEGSANMYAIHQVVLPVLGYNIQYPKNKVGQWYHDILSRDGLQTCRFKVPTLKLNIPGCYRQILKHPCNLSYQLMEDHDIDVKTKGSHIDETALSLLISFDLDASCYATVCLKEIMKHDV</sequence>
<organism>
    <name type="scientific">Homo sapiens</name>
    <name type="common">Human</name>
    <dbReference type="NCBI Taxonomy" id="9606"/>
    <lineage>
        <taxon>Eukaryota</taxon>
        <taxon>Metazoa</taxon>
        <taxon>Chordata</taxon>
        <taxon>Craniata</taxon>
        <taxon>Vertebrata</taxon>
        <taxon>Euteleostomi</taxon>
        <taxon>Mammalia</taxon>
        <taxon>Eutheria</taxon>
        <taxon>Euarchontoglires</taxon>
        <taxon>Primates</taxon>
        <taxon>Haplorrhini</taxon>
        <taxon>Catarrhini</taxon>
        <taxon>Hominidae</taxon>
        <taxon>Homo</taxon>
    </lineage>
</organism>
<reference key="1">
    <citation type="journal article" date="2001" name="Genome Res.">
        <title>Towards a catalog of human genes and proteins: sequencing and analysis of 500 novel complete protein coding human cDNAs.</title>
        <authorList>
            <person name="Wiemann S."/>
            <person name="Weil B."/>
            <person name="Wellenreuther R."/>
            <person name="Gassenhuber J."/>
            <person name="Glassl S."/>
            <person name="Ansorge W."/>
            <person name="Boecher M."/>
            <person name="Bloecker H."/>
            <person name="Bauersachs S."/>
            <person name="Blum H."/>
            <person name="Lauber J."/>
            <person name="Duesterhoeft A."/>
            <person name="Beyer A."/>
            <person name="Koehrer K."/>
            <person name="Strack N."/>
            <person name="Mewes H.-W."/>
            <person name="Ottenwaelder B."/>
            <person name="Obermaier B."/>
            <person name="Tampe J."/>
            <person name="Heubner D."/>
            <person name="Wambutt R."/>
            <person name="Korn B."/>
            <person name="Klein M."/>
            <person name="Poustka A."/>
        </authorList>
    </citation>
    <scope>NUCLEOTIDE SEQUENCE [LARGE SCALE MRNA] (ISOFORM 1)</scope>
    <source>
        <tissue>Testis</tissue>
    </source>
</reference>
<reference key="2">
    <citation type="journal article" date="2004" name="Nat. Genet.">
        <title>Complete sequencing and characterization of 21,243 full-length human cDNAs.</title>
        <authorList>
            <person name="Ota T."/>
            <person name="Suzuki Y."/>
            <person name="Nishikawa T."/>
            <person name="Otsuki T."/>
            <person name="Sugiyama T."/>
            <person name="Irie R."/>
            <person name="Wakamatsu A."/>
            <person name="Hayashi K."/>
            <person name="Sato H."/>
            <person name="Nagai K."/>
            <person name="Kimura K."/>
            <person name="Makita H."/>
            <person name="Sekine M."/>
            <person name="Obayashi M."/>
            <person name="Nishi T."/>
            <person name="Shibahara T."/>
            <person name="Tanaka T."/>
            <person name="Ishii S."/>
            <person name="Yamamoto J."/>
            <person name="Saito K."/>
            <person name="Kawai Y."/>
            <person name="Isono Y."/>
            <person name="Nakamura Y."/>
            <person name="Nagahari K."/>
            <person name="Murakami K."/>
            <person name="Yasuda T."/>
            <person name="Iwayanagi T."/>
            <person name="Wagatsuma M."/>
            <person name="Shiratori A."/>
            <person name="Sudo H."/>
            <person name="Hosoiri T."/>
            <person name="Kaku Y."/>
            <person name="Kodaira H."/>
            <person name="Kondo H."/>
            <person name="Sugawara M."/>
            <person name="Takahashi M."/>
            <person name="Kanda K."/>
            <person name="Yokoi T."/>
            <person name="Furuya T."/>
            <person name="Kikkawa E."/>
            <person name="Omura Y."/>
            <person name="Abe K."/>
            <person name="Kamihara K."/>
            <person name="Katsuta N."/>
            <person name="Sato K."/>
            <person name="Tanikawa M."/>
            <person name="Yamazaki M."/>
            <person name="Ninomiya K."/>
            <person name="Ishibashi T."/>
            <person name="Yamashita H."/>
            <person name="Murakawa K."/>
            <person name="Fujimori K."/>
            <person name="Tanai H."/>
            <person name="Kimata M."/>
            <person name="Watanabe M."/>
            <person name="Hiraoka S."/>
            <person name="Chiba Y."/>
            <person name="Ishida S."/>
            <person name="Ono Y."/>
            <person name="Takiguchi S."/>
            <person name="Watanabe S."/>
            <person name="Yosida M."/>
            <person name="Hotuta T."/>
            <person name="Kusano J."/>
            <person name="Kanehori K."/>
            <person name="Takahashi-Fujii A."/>
            <person name="Hara H."/>
            <person name="Tanase T.-O."/>
            <person name="Nomura Y."/>
            <person name="Togiya S."/>
            <person name="Komai F."/>
            <person name="Hara R."/>
            <person name="Takeuchi K."/>
            <person name="Arita M."/>
            <person name="Imose N."/>
            <person name="Musashino K."/>
            <person name="Yuuki H."/>
            <person name="Oshima A."/>
            <person name="Sasaki N."/>
            <person name="Aotsuka S."/>
            <person name="Yoshikawa Y."/>
            <person name="Matsunawa H."/>
            <person name="Ichihara T."/>
            <person name="Shiohata N."/>
            <person name="Sano S."/>
            <person name="Moriya S."/>
            <person name="Momiyama H."/>
            <person name="Satoh N."/>
            <person name="Takami S."/>
            <person name="Terashima Y."/>
            <person name="Suzuki O."/>
            <person name="Nakagawa S."/>
            <person name="Senoh A."/>
            <person name="Mizoguchi H."/>
            <person name="Goto Y."/>
            <person name="Shimizu F."/>
            <person name="Wakebe H."/>
            <person name="Hishigaki H."/>
            <person name="Watanabe T."/>
            <person name="Sugiyama A."/>
            <person name="Takemoto M."/>
            <person name="Kawakami B."/>
            <person name="Yamazaki M."/>
            <person name="Watanabe K."/>
            <person name="Kumagai A."/>
            <person name="Itakura S."/>
            <person name="Fukuzumi Y."/>
            <person name="Fujimori Y."/>
            <person name="Komiyama M."/>
            <person name="Tashiro H."/>
            <person name="Tanigami A."/>
            <person name="Fujiwara T."/>
            <person name="Ono T."/>
            <person name="Yamada K."/>
            <person name="Fujii Y."/>
            <person name="Ozaki K."/>
            <person name="Hirao M."/>
            <person name="Ohmori Y."/>
            <person name="Kawabata A."/>
            <person name="Hikiji T."/>
            <person name="Kobatake N."/>
            <person name="Inagaki H."/>
            <person name="Ikema Y."/>
            <person name="Okamoto S."/>
            <person name="Okitani R."/>
            <person name="Kawakami T."/>
            <person name="Noguchi S."/>
            <person name="Itoh T."/>
            <person name="Shigeta K."/>
            <person name="Senba T."/>
            <person name="Matsumura K."/>
            <person name="Nakajima Y."/>
            <person name="Mizuno T."/>
            <person name="Morinaga M."/>
            <person name="Sasaki M."/>
            <person name="Togashi T."/>
            <person name="Oyama M."/>
            <person name="Hata H."/>
            <person name="Watanabe M."/>
            <person name="Komatsu T."/>
            <person name="Mizushima-Sugano J."/>
            <person name="Satoh T."/>
            <person name="Shirai Y."/>
            <person name="Takahashi Y."/>
            <person name="Nakagawa K."/>
            <person name="Okumura K."/>
            <person name="Nagase T."/>
            <person name="Nomura N."/>
            <person name="Kikuchi H."/>
            <person name="Masuho Y."/>
            <person name="Yamashita R."/>
            <person name="Nakai K."/>
            <person name="Yada T."/>
            <person name="Nakamura Y."/>
            <person name="Ohara O."/>
            <person name="Isogai T."/>
            <person name="Sugano S."/>
        </authorList>
    </citation>
    <scope>NUCLEOTIDE SEQUENCE [LARGE SCALE MRNA] (ISOFORM 2)</scope>
    <source>
        <tissue>Stomach</tissue>
    </source>
</reference>
<reference key="3">
    <citation type="journal article" date="2007" name="BMC Genomics">
        <title>The full-ORF clone resource of the German cDNA consortium.</title>
        <authorList>
            <person name="Bechtel S."/>
            <person name="Rosenfelder H."/>
            <person name="Duda A."/>
            <person name="Schmidt C.P."/>
            <person name="Ernst U."/>
            <person name="Wellenreuther R."/>
            <person name="Mehrle A."/>
            <person name="Schuster C."/>
            <person name="Bahr A."/>
            <person name="Bloecker H."/>
            <person name="Heubner D."/>
            <person name="Hoerlein A."/>
            <person name="Michel G."/>
            <person name="Wedler H."/>
            <person name="Koehrer K."/>
            <person name="Ottenwaelder B."/>
            <person name="Poustka A."/>
            <person name="Wiemann S."/>
            <person name="Schupp I."/>
        </authorList>
    </citation>
    <scope>NUCLEOTIDE SEQUENCE [LARGE SCALE MRNA] (ISOFORM 1)</scope>
    <scope>VARIANT GLU-264</scope>
    <source>
        <tissue>Seminoma</tissue>
    </source>
</reference>
<reference key="4">
    <citation type="journal article" date="2006" name="Nature">
        <title>The finished DNA sequence of human chromosome 12.</title>
        <authorList>
            <person name="Scherer S.E."/>
            <person name="Muzny D.M."/>
            <person name="Buhay C.J."/>
            <person name="Chen R."/>
            <person name="Cree A."/>
            <person name="Ding Y."/>
            <person name="Dugan-Rocha S."/>
            <person name="Gill R."/>
            <person name="Gunaratne P."/>
            <person name="Harris R.A."/>
            <person name="Hawes A.C."/>
            <person name="Hernandez J."/>
            <person name="Hodgson A.V."/>
            <person name="Hume J."/>
            <person name="Jackson A."/>
            <person name="Khan Z.M."/>
            <person name="Kovar-Smith C."/>
            <person name="Lewis L.R."/>
            <person name="Lozado R.J."/>
            <person name="Metzker M.L."/>
            <person name="Milosavljevic A."/>
            <person name="Miner G.R."/>
            <person name="Montgomery K.T."/>
            <person name="Morgan M.B."/>
            <person name="Nazareth L.V."/>
            <person name="Scott G."/>
            <person name="Sodergren E."/>
            <person name="Song X.-Z."/>
            <person name="Steffen D."/>
            <person name="Lovering R.C."/>
            <person name="Wheeler D.A."/>
            <person name="Worley K.C."/>
            <person name="Yuan Y."/>
            <person name="Zhang Z."/>
            <person name="Adams C.Q."/>
            <person name="Ansari-Lari M.A."/>
            <person name="Ayele M."/>
            <person name="Brown M.J."/>
            <person name="Chen G."/>
            <person name="Chen Z."/>
            <person name="Clerc-Blankenburg K.P."/>
            <person name="Davis C."/>
            <person name="Delgado O."/>
            <person name="Dinh H.H."/>
            <person name="Draper H."/>
            <person name="Gonzalez-Garay M.L."/>
            <person name="Havlak P."/>
            <person name="Jackson L.R."/>
            <person name="Jacob L.S."/>
            <person name="Kelly S.H."/>
            <person name="Li L."/>
            <person name="Li Z."/>
            <person name="Liu J."/>
            <person name="Liu W."/>
            <person name="Lu J."/>
            <person name="Maheshwari M."/>
            <person name="Nguyen B.-V."/>
            <person name="Okwuonu G.O."/>
            <person name="Pasternak S."/>
            <person name="Perez L.M."/>
            <person name="Plopper F.J.H."/>
            <person name="Santibanez J."/>
            <person name="Shen H."/>
            <person name="Tabor P.E."/>
            <person name="Verduzco D."/>
            <person name="Waldron L."/>
            <person name="Wang Q."/>
            <person name="Williams G.A."/>
            <person name="Zhang J."/>
            <person name="Zhou J."/>
            <person name="Allen C.C."/>
            <person name="Amin A.G."/>
            <person name="Anyalebechi V."/>
            <person name="Bailey M."/>
            <person name="Barbaria J.A."/>
            <person name="Bimage K.E."/>
            <person name="Bryant N.P."/>
            <person name="Burch P.E."/>
            <person name="Burkett C.E."/>
            <person name="Burrell K.L."/>
            <person name="Calderon E."/>
            <person name="Cardenas V."/>
            <person name="Carter K."/>
            <person name="Casias K."/>
            <person name="Cavazos I."/>
            <person name="Cavazos S.R."/>
            <person name="Ceasar H."/>
            <person name="Chacko J."/>
            <person name="Chan S.N."/>
            <person name="Chavez D."/>
            <person name="Christopoulos C."/>
            <person name="Chu J."/>
            <person name="Cockrell R."/>
            <person name="Cox C.D."/>
            <person name="Dang M."/>
            <person name="Dathorne S.R."/>
            <person name="David R."/>
            <person name="Davis C.M."/>
            <person name="Davy-Carroll L."/>
            <person name="Deshazo D.R."/>
            <person name="Donlin J.E."/>
            <person name="D'Souza L."/>
            <person name="Eaves K.A."/>
            <person name="Egan A."/>
            <person name="Emery-Cohen A.J."/>
            <person name="Escotto M."/>
            <person name="Flagg N."/>
            <person name="Forbes L.D."/>
            <person name="Gabisi A.M."/>
            <person name="Garza M."/>
            <person name="Hamilton C."/>
            <person name="Henderson N."/>
            <person name="Hernandez O."/>
            <person name="Hines S."/>
            <person name="Hogues M.E."/>
            <person name="Huang M."/>
            <person name="Idlebird D.G."/>
            <person name="Johnson R."/>
            <person name="Jolivet A."/>
            <person name="Jones S."/>
            <person name="Kagan R."/>
            <person name="King L.M."/>
            <person name="Leal B."/>
            <person name="Lebow H."/>
            <person name="Lee S."/>
            <person name="LeVan J.M."/>
            <person name="Lewis L.C."/>
            <person name="London P."/>
            <person name="Lorensuhewa L.M."/>
            <person name="Loulseged H."/>
            <person name="Lovett D.A."/>
            <person name="Lucier A."/>
            <person name="Lucier R.L."/>
            <person name="Ma J."/>
            <person name="Madu R.C."/>
            <person name="Mapua P."/>
            <person name="Martindale A.D."/>
            <person name="Martinez E."/>
            <person name="Massey E."/>
            <person name="Mawhiney S."/>
            <person name="Meador M.G."/>
            <person name="Mendez S."/>
            <person name="Mercado C."/>
            <person name="Mercado I.C."/>
            <person name="Merritt C.E."/>
            <person name="Miner Z.L."/>
            <person name="Minja E."/>
            <person name="Mitchell T."/>
            <person name="Mohabbat F."/>
            <person name="Mohabbat K."/>
            <person name="Montgomery B."/>
            <person name="Moore N."/>
            <person name="Morris S."/>
            <person name="Munidasa M."/>
            <person name="Ngo R.N."/>
            <person name="Nguyen N.B."/>
            <person name="Nickerson E."/>
            <person name="Nwaokelemeh O.O."/>
            <person name="Nwokenkwo S."/>
            <person name="Obregon M."/>
            <person name="Oguh M."/>
            <person name="Oragunye N."/>
            <person name="Oviedo R.J."/>
            <person name="Parish B.J."/>
            <person name="Parker D.N."/>
            <person name="Parrish J."/>
            <person name="Parks K.L."/>
            <person name="Paul H.A."/>
            <person name="Payton B.A."/>
            <person name="Perez A."/>
            <person name="Perrin W."/>
            <person name="Pickens A."/>
            <person name="Primus E.L."/>
            <person name="Pu L.-L."/>
            <person name="Puazo M."/>
            <person name="Quiles M.M."/>
            <person name="Quiroz J.B."/>
            <person name="Rabata D."/>
            <person name="Reeves K."/>
            <person name="Ruiz S.J."/>
            <person name="Shao H."/>
            <person name="Sisson I."/>
            <person name="Sonaike T."/>
            <person name="Sorelle R.P."/>
            <person name="Sutton A.E."/>
            <person name="Svatek A.F."/>
            <person name="Svetz L.A."/>
            <person name="Tamerisa K.S."/>
            <person name="Taylor T.R."/>
            <person name="Teague B."/>
            <person name="Thomas N."/>
            <person name="Thorn R.D."/>
            <person name="Trejos Z.Y."/>
            <person name="Trevino B.K."/>
            <person name="Ukegbu O.N."/>
            <person name="Urban J.B."/>
            <person name="Vasquez L.I."/>
            <person name="Vera V.A."/>
            <person name="Villasana D.M."/>
            <person name="Wang L."/>
            <person name="Ward-Moore S."/>
            <person name="Warren J.T."/>
            <person name="Wei X."/>
            <person name="White F."/>
            <person name="Williamson A.L."/>
            <person name="Wleczyk R."/>
            <person name="Wooden H.S."/>
            <person name="Wooden S.H."/>
            <person name="Yen J."/>
            <person name="Yoon L."/>
            <person name="Yoon V."/>
            <person name="Zorrilla S.E."/>
            <person name="Nelson D."/>
            <person name="Kucherlapati R."/>
            <person name="Weinstock G."/>
            <person name="Gibbs R.A."/>
        </authorList>
    </citation>
    <scope>NUCLEOTIDE SEQUENCE [LARGE SCALE GENOMIC DNA]</scope>
</reference>
<reference key="5">
    <citation type="journal article" date="2004" name="Genome Res.">
        <title>The status, quality, and expansion of the NIH full-length cDNA project: the Mammalian Gene Collection (MGC).</title>
        <authorList>
            <consortium name="The MGC Project Team"/>
        </authorList>
    </citation>
    <scope>NUCLEOTIDE SEQUENCE [LARGE SCALE MRNA] (ISOFORM 1)</scope>
    <source>
        <tissue>Brain</tissue>
        <tissue>Prostate</tissue>
    </source>
</reference>
<reference key="6">
    <citation type="journal article" date="2011" name="BMC Syst. Biol.">
        <title>Initial characterization of the human central proteome.</title>
        <authorList>
            <person name="Burkard T.R."/>
            <person name="Planyavsky M."/>
            <person name="Kaupe I."/>
            <person name="Breitwieser F.P."/>
            <person name="Buerckstuemmer T."/>
            <person name="Bennett K.L."/>
            <person name="Superti-Furga G."/>
            <person name="Colinge J."/>
        </authorList>
    </citation>
    <scope>IDENTIFICATION BY MASS SPECTROMETRY [LARGE SCALE ANALYSIS]</scope>
</reference>
<reference key="7">
    <citation type="journal article" date="2013" name="J. Proteome Res.">
        <title>Toward a comprehensive characterization of a human cancer cell phosphoproteome.</title>
        <authorList>
            <person name="Zhou H."/>
            <person name="Di Palma S."/>
            <person name="Preisinger C."/>
            <person name="Peng M."/>
            <person name="Polat A.N."/>
            <person name="Heck A.J."/>
            <person name="Mohammed S."/>
        </authorList>
    </citation>
    <scope>PHOSPHORYLATION [LARGE SCALE ANALYSIS] AT SER-79</scope>
    <scope>IDENTIFICATION BY MASS SPECTROMETRY [LARGE SCALE ANALYSIS]</scope>
    <source>
        <tissue>Cervix carcinoma</tissue>
        <tissue>Erythroleukemia</tissue>
    </source>
</reference>
<reference key="8">
    <citation type="journal article" date="2022" name="Mol. Cell">
        <title>Pseudouridine synthases modify human pre-mRNA co-transcriptionally and affect pre-mRNA processing.</title>
        <authorList>
            <person name="Martinez N.M."/>
            <person name="Su A."/>
            <person name="Burns M.C."/>
            <person name="Nussbacher J.K."/>
            <person name="Schaening C."/>
            <person name="Sathe S."/>
            <person name="Yeo G.W."/>
            <person name="Gilbert W.V."/>
        </authorList>
    </citation>
    <scope>FUNCTION</scope>
    <scope>CATALYTIC ACTIVITY</scope>
</reference>
<gene>
    <name evidence="6 8" type="primary">PUS7L</name>
</gene>
<accession>Q9H0K6</accession>
<accession>B3KUJ1</accession>
<accession>Q05CU0</accession>
<accession>Q6AHZ3</accession>
<accession>Q6NUP2</accession>
<dbReference type="EC" id="5.4.99.-" evidence="4"/>
<dbReference type="EMBL" id="AL136759">
    <property type="protein sequence ID" value="CAB66693.1"/>
    <property type="molecule type" value="mRNA"/>
</dbReference>
<dbReference type="EMBL" id="AK097331">
    <property type="protein sequence ID" value="BAG53453.1"/>
    <property type="molecule type" value="mRNA"/>
</dbReference>
<dbReference type="EMBL" id="AC016143">
    <property type="status" value="NOT_ANNOTATED_CDS"/>
    <property type="molecule type" value="Genomic_DNA"/>
</dbReference>
<dbReference type="EMBL" id="AC093012">
    <property type="status" value="NOT_ANNOTATED_CDS"/>
    <property type="molecule type" value="Genomic_DNA"/>
</dbReference>
<dbReference type="EMBL" id="CR627435">
    <property type="protein sequence ID" value="CAH10521.1"/>
    <property type="molecule type" value="mRNA"/>
</dbReference>
<dbReference type="EMBL" id="BC020781">
    <property type="protein sequence ID" value="AAH20781.1"/>
    <property type="status" value="ALT_TERM"/>
    <property type="molecule type" value="mRNA"/>
</dbReference>
<dbReference type="EMBL" id="BC033621">
    <property type="protein sequence ID" value="AAH33621.1"/>
    <property type="molecule type" value="mRNA"/>
</dbReference>
<dbReference type="EMBL" id="BC068502">
    <property type="protein sequence ID" value="AAH68502.1"/>
    <property type="molecule type" value="mRNA"/>
</dbReference>
<dbReference type="CCDS" id="CCDS61104.1">
    <molecule id="Q9H0K6-2"/>
</dbReference>
<dbReference type="CCDS" id="CCDS8743.1">
    <molecule id="Q9H0K6-1"/>
</dbReference>
<dbReference type="RefSeq" id="NP_001092084.1">
    <molecule id="Q9H0K6-1"/>
    <property type="nucleotide sequence ID" value="NM_001098614.3"/>
</dbReference>
<dbReference type="RefSeq" id="NP_001092085.1">
    <molecule id="Q9H0K6-1"/>
    <property type="nucleotide sequence ID" value="NM_001098615.2"/>
</dbReference>
<dbReference type="RefSeq" id="NP_001258755.1">
    <molecule id="Q9H0K6-2"/>
    <property type="nucleotide sequence ID" value="NM_001271826.2"/>
</dbReference>
<dbReference type="RefSeq" id="NP_112582.3">
    <molecule id="Q9H0K6-1"/>
    <property type="nucleotide sequence ID" value="NM_031292.4"/>
</dbReference>
<dbReference type="SMR" id="Q9H0K6"/>
<dbReference type="BioGRID" id="123650">
    <property type="interactions" value="15"/>
</dbReference>
<dbReference type="FunCoup" id="Q9H0K6">
    <property type="interactions" value="1825"/>
</dbReference>
<dbReference type="IntAct" id="Q9H0K6">
    <property type="interactions" value="8"/>
</dbReference>
<dbReference type="STRING" id="9606.ENSP00000343081"/>
<dbReference type="GlyGen" id="Q9H0K6">
    <property type="glycosylation" value="1 site, 1 O-linked glycan (1 site)"/>
</dbReference>
<dbReference type="iPTMnet" id="Q9H0K6"/>
<dbReference type="PhosphoSitePlus" id="Q9H0K6"/>
<dbReference type="BioMuta" id="PUS7L"/>
<dbReference type="DMDM" id="74733527"/>
<dbReference type="jPOST" id="Q9H0K6"/>
<dbReference type="MassIVE" id="Q9H0K6"/>
<dbReference type="PaxDb" id="9606-ENSP00000415899"/>
<dbReference type="PeptideAtlas" id="Q9H0K6"/>
<dbReference type="ProteomicsDB" id="80292">
    <molecule id="Q9H0K6-1"/>
</dbReference>
<dbReference type="Pumba" id="Q9H0K6"/>
<dbReference type="Antibodypedia" id="25131">
    <property type="antibodies" value="46 antibodies from 16 providers"/>
</dbReference>
<dbReference type="DNASU" id="83448"/>
<dbReference type="Ensembl" id="ENST00000344862.10">
    <molecule id="Q9H0K6-1"/>
    <property type="protein sequence ID" value="ENSP00000343081.5"/>
    <property type="gene ID" value="ENSG00000129317.15"/>
</dbReference>
<dbReference type="Ensembl" id="ENST00000416848.6">
    <molecule id="Q9H0K6-1"/>
    <property type="protein sequence ID" value="ENSP00000415899.2"/>
    <property type="gene ID" value="ENSG00000129317.15"/>
</dbReference>
<dbReference type="Ensembl" id="ENST00000431332.7">
    <molecule id="Q9H0K6-2"/>
    <property type="protein sequence ID" value="ENSP00000398497.3"/>
    <property type="gene ID" value="ENSG00000129317.15"/>
</dbReference>
<dbReference type="Ensembl" id="ENST00000551923.5">
    <molecule id="Q9H0K6-1"/>
    <property type="protein sequence ID" value="ENSP00000447706.1"/>
    <property type="gene ID" value="ENSG00000129317.15"/>
</dbReference>
<dbReference type="GeneID" id="83448"/>
<dbReference type="KEGG" id="hsa:83448"/>
<dbReference type="MANE-Select" id="ENST00000344862.10">
    <property type="protein sequence ID" value="ENSP00000343081.5"/>
    <property type="RefSeq nucleotide sequence ID" value="NM_031292.5"/>
    <property type="RefSeq protein sequence ID" value="NP_112582.3"/>
</dbReference>
<dbReference type="UCSC" id="uc001rnq.7">
    <molecule id="Q9H0K6-1"/>
    <property type="organism name" value="human"/>
</dbReference>
<dbReference type="AGR" id="HGNC:25276"/>
<dbReference type="CTD" id="83448"/>
<dbReference type="DisGeNET" id="83448"/>
<dbReference type="GeneCards" id="PUS7L"/>
<dbReference type="HGNC" id="HGNC:25276">
    <property type="gene designation" value="PUS7L"/>
</dbReference>
<dbReference type="HPA" id="ENSG00000129317">
    <property type="expression patterns" value="Low tissue specificity"/>
</dbReference>
<dbReference type="neXtProt" id="NX_Q9H0K6"/>
<dbReference type="OpenTargets" id="ENSG00000129317"/>
<dbReference type="PharmGKB" id="PA143485588"/>
<dbReference type="VEuPathDB" id="HostDB:ENSG00000129317"/>
<dbReference type="eggNOG" id="KOG2339">
    <property type="taxonomic scope" value="Eukaryota"/>
</dbReference>
<dbReference type="GeneTree" id="ENSGT00530000063554"/>
<dbReference type="HOGENOM" id="CLU_005281_1_1_1"/>
<dbReference type="InParanoid" id="Q9H0K6"/>
<dbReference type="OMA" id="FPNNKVH"/>
<dbReference type="OrthoDB" id="447290at2759"/>
<dbReference type="PAN-GO" id="Q9H0K6">
    <property type="GO annotations" value="3 GO annotations based on evolutionary models"/>
</dbReference>
<dbReference type="PhylomeDB" id="Q9H0K6"/>
<dbReference type="TreeFam" id="TF314278"/>
<dbReference type="PathwayCommons" id="Q9H0K6"/>
<dbReference type="SignaLink" id="Q9H0K6"/>
<dbReference type="BioGRID-ORCS" id="83448">
    <property type="hits" value="10 hits in 1153 CRISPR screens"/>
</dbReference>
<dbReference type="ChiTaRS" id="PUS7L">
    <property type="organism name" value="human"/>
</dbReference>
<dbReference type="GeneWiki" id="PUS7L"/>
<dbReference type="GenomeRNAi" id="83448"/>
<dbReference type="Pharos" id="Q9H0K6">
    <property type="development level" value="Tdark"/>
</dbReference>
<dbReference type="PRO" id="PR:Q9H0K6"/>
<dbReference type="Proteomes" id="UP000005640">
    <property type="component" value="Chromosome 12"/>
</dbReference>
<dbReference type="RNAct" id="Q9H0K6">
    <property type="molecule type" value="protein"/>
</dbReference>
<dbReference type="Bgee" id="ENSG00000129317">
    <property type="expression patterns" value="Expressed in calcaneal tendon and 188 other cell types or tissues"/>
</dbReference>
<dbReference type="ExpressionAtlas" id="Q9H0K6">
    <property type="expression patterns" value="baseline and differential"/>
</dbReference>
<dbReference type="GO" id="GO:0005634">
    <property type="term" value="C:nucleus"/>
    <property type="evidence" value="ECO:0000318"/>
    <property type="project" value="GO_Central"/>
</dbReference>
<dbReference type="GO" id="GO:0009982">
    <property type="term" value="F:pseudouridine synthase activity"/>
    <property type="evidence" value="ECO:0000314"/>
    <property type="project" value="UniProtKB"/>
</dbReference>
<dbReference type="GO" id="GO:0003723">
    <property type="term" value="F:RNA binding"/>
    <property type="evidence" value="ECO:0007669"/>
    <property type="project" value="InterPro"/>
</dbReference>
<dbReference type="GO" id="GO:0006397">
    <property type="term" value="P:mRNA processing"/>
    <property type="evidence" value="ECO:0007669"/>
    <property type="project" value="UniProtKB-KW"/>
</dbReference>
<dbReference type="GO" id="GO:1990481">
    <property type="term" value="P:mRNA pseudouridine synthesis"/>
    <property type="evidence" value="ECO:0000314"/>
    <property type="project" value="UniProtKB"/>
</dbReference>
<dbReference type="GO" id="GO:0001522">
    <property type="term" value="P:pseudouridine synthesis"/>
    <property type="evidence" value="ECO:0000318"/>
    <property type="project" value="GO_Central"/>
</dbReference>
<dbReference type="CDD" id="cd02576">
    <property type="entry name" value="PseudoU_synth_ScPUS7"/>
    <property type="match status" value="1"/>
</dbReference>
<dbReference type="FunFam" id="3.30.2350.20:FF:000004">
    <property type="entry name" value="pseudouridylate synthase 7 homolog-like protein"/>
    <property type="match status" value="1"/>
</dbReference>
<dbReference type="FunFam" id="3.30.2350.20:FF:000005">
    <property type="entry name" value="pseudouridylate synthase 7 homolog-like protein"/>
    <property type="match status" value="1"/>
</dbReference>
<dbReference type="Gene3D" id="3.30.2350.20">
    <property type="entry name" value="TruD, catalytic domain"/>
    <property type="match status" value="2"/>
</dbReference>
<dbReference type="InterPro" id="IPR020103">
    <property type="entry name" value="PsdUridine_synth_cat_dom_sf"/>
</dbReference>
<dbReference type="InterPro" id="IPR001656">
    <property type="entry name" value="PsdUridine_synth_TruD"/>
</dbReference>
<dbReference type="InterPro" id="IPR011760">
    <property type="entry name" value="PsdUridine_synth_TruD_insert"/>
</dbReference>
<dbReference type="InterPro" id="IPR056963">
    <property type="entry name" value="PUS7L_N"/>
</dbReference>
<dbReference type="InterPro" id="IPR056961">
    <property type="entry name" value="R3H_PUS7L"/>
</dbReference>
<dbReference type="InterPro" id="IPR042214">
    <property type="entry name" value="TruD_catalytic"/>
</dbReference>
<dbReference type="NCBIfam" id="TIGR00094">
    <property type="entry name" value="tRNA_TruD_broad"/>
    <property type="match status" value="1"/>
</dbReference>
<dbReference type="PANTHER" id="PTHR13326:SF21">
    <property type="entry name" value="PSEUDOURIDYLATE SYNTHASE PUS7L"/>
    <property type="match status" value="1"/>
</dbReference>
<dbReference type="PANTHER" id="PTHR13326">
    <property type="entry name" value="TRNA PSEUDOURIDINE SYNTHASE D"/>
    <property type="match status" value="1"/>
</dbReference>
<dbReference type="Pfam" id="PF23943">
    <property type="entry name" value="PUS7L_N"/>
    <property type="match status" value="1"/>
</dbReference>
<dbReference type="Pfam" id="PF25094">
    <property type="entry name" value="R3H_PUS7L"/>
    <property type="match status" value="1"/>
</dbReference>
<dbReference type="Pfam" id="PF01142">
    <property type="entry name" value="TruD"/>
    <property type="match status" value="1"/>
</dbReference>
<dbReference type="PIRSF" id="PIRSF037016">
    <property type="entry name" value="Pseudouridin_synth_euk_prd"/>
    <property type="match status" value="1"/>
</dbReference>
<dbReference type="SUPFAM" id="SSF55120">
    <property type="entry name" value="Pseudouridine synthase"/>
    <property type="match status" value="1"/>
</dbReference>
<dbReference type="PROSITE" id="PS50984">
    <property type="entry name" value="TRUD"/>
    <property type="match status" value="1"/>
</dbReference>
<proteinExistence type="evidence at protein level"/>
<name>PUS7L_HUMAN</name>
<evidence type="ECO:0000250" key="1">
    <source>
        <dbReference type="UniProtKB" id="Q57261"/>
    </source>
</evidence>
<evidence type="ECO:0000255" key="2">
    <source>
        <dbReference type="PROSITE-ProRule" id="PRU00342"/>
    </source>
</evidence>
<evidence type="ECO:0000269" key="3">
    <source>
    </source>
</evidence>
<evidence type="ECO:0000269" key="4">
    <source>
    </source>
</evidence>
<evidence type="ECO:0000303" key="5">
    <source>
    </source>
</evidence>
<evidence type="ECO:0000303" key="6">
    <source>
    </source>
</evidence>
<evidence type="ECO:0000305" key="7"/>
<evidence type="ECO:0000312" key="8">
    <source>
        <dbReference type="HGNC" id="HGNC:25276"/>
    </source>
</evidence>
<evidence type="ECO:0007744" key="9">
    <source>
    </source>
</evidence>
<feature type="chain" id="PRO_0000316785" description="Pseudouridylate synthase PUS7L">
    <location>
        <begin position="1"/>
        <end position="701"/>
    </location>
</feature>
<feature type="domain" description="TRUD" evidence="2">
    <location>
        <begin position="424"/>
        <end position="647"/>
    </location>
</feature>
<feature type="active site" description="Nucleophile" evidence="1">
    <location>
        <position position="339"/>
    </location>
</feature>
<feature type="modified residue" description="Phosphoserine" evidence="9">
    <location>
        <position position="79"/>
    </location>
</feature>
<feature type="splice variant" id="VSP_054568" description="In isoform 2." evidence="5">
    <location>
        <begin position="1"/>
        <end position="313"/>
    </location>
</feature>
<feature type="sequence variant" id="VAR_038392" description="In dbSNP:rs33999797.">
    <original>I</original>
    <variation>M</variation>
    <location>
        <position position="92"/>
    </location>
</feature>
<feature type="sequence variant" id="VAR_038393" description="In dbSNP:rs1057190." evidence="3">
    <original>K</original>
    <variation>E</variation>
    <location>
        <position position="264"/>
    </location>
</feature>
<feature type="sequence variant" id="VAR_038394" description="In dbSNP:rs34668377.">
    <original>I</original>
    <variation>V</variation>
    <location>
        <position position="343"/>
    </location>
</feature>
<feature type="sequence conflict" description="In Ref. 5; AAH68502." evidence="7" ref="5">
    <original>L</original>
    <variation>V</variation>
    <location>
        <position position="167"/>
    </location>
</feature>
<feature type="sequence conflict" description="In Ref. 5; AAH20781." evidence="7" ref="5">
    <original>L</original>
    <variation>F</variation>
    <location>
        <position position="206"/>
    </location>
</feature>
<feature type="sequence conflict" description="In Ref. 5; AAH68502." evidence="7" ref="5">
    <original>P</original>
    <variation>Q</variation>
    <location>
        <position position="572"/>
    </location>
</feature>
<keyword id="KW-0025">Alternative splicing</keyword>
<keyword id="KW-0413">Isomerase</keyword>
<keyword id="KW-0507">mRNA processing</keyword>
<keyword id="KW-0597">Phosphoprotein</keyword>
<keyword id="KW-1267">Proteomics identification</keyword>
<keyword id="KW-1185">Reference proteome</keyword>
<comment type="function">
    <text evidence="4">Pseudouridine synthase that catalyzes pseudouridylation of mRNAs.</text>
</comment>
<comment type="catalytic activity">
    <reaction evidence="4">
        <text>a uridine in mRNA = a pseudouridine in mRNA</text>
        <dbReference type="Rhea" id="RHEA:56644"/>
        <dbReference type="Rhea" id="RHEA-COMP:14658"/>
        <dbReference type="Rhea" id="RHEA-COMP:14659"/>
        <dbReference type="ChEBI" id="CHEBI:65314"/>
        <dbReference type="ChEBI" id="CHEBI:65315"/>
    </reaction>
</comment>
<comment type="interaction">
    <interactant intactId="EBI-5464419">
        <id>Q9H0K6</id>
    </interactant>
    <interactant intactId="EBI-719493">
        <id>P14373</id>
        <label>TRIM27</label>
    </interactant>
    <organismsDiffer>false</organismsDiffer>
    <experiments>7</experiments>
</comment>
<comment type="interaction">
    <interactant intactId="EBI-5464419">
        <id>Q9H0K6</id>
    </interactant>
    <interactant intactId="EBI-725997">
        <id>Q8WV44</id>
        <label>TRIM41</label>
    </interactant>
    <organismsDiffer>false</organismsDiffer>
    <experiments>3</experiments>
</comment>
<comment type="alternative products">
    <event type="alternative splicing"/>
    <isoform>
        <id>Q9H0K6-1</id>
        <name>1</name>
        <sequence type="displayed"/>
    </isoform>
    <isoform>
        <id>Q9H0K6-2</id>
        <name>2</name>
        <sequence type="described" ref="VSP_054568"/>
    </isoform>
</comment>
<comment type="similarity">
    <text evidence="7">Belongs to the pseudouridine synthase TruD family.</text>
</comment>
<comment type="sequence caution" evidence="7">
    <conflict type="miscellaneous discrepancy">
        <sequence resource="EMBL-CDS" id="AAH20781"/>
    </conflict>
    <text>Contaminating sequence. Potential poly-A sequence.</text>
</comment>